<feature type="chain" id="PRO_0000273392" description="Major facilitator superfamily domain-containing protein 3">
    <location>
        <begin position="1"/>
        <end position="412"/>
    </location>
</feature>
<feature type="transmembrane region" description="Helical" evidence="1">
    <location>
        <begin position="10"/>
        <end position="30"/>
    </location>
</feature>
<feature type="transmembrane region" description="Helical" evidence="1">
    <location>
        <begin position="40"/>
        <end position="60"/>
    </location>
</feature>
<feature type="transmembrane region" description="Helical" evidence="1">
    <location>
        <begin position="73"/>
        <end position="93"/>
    </location>
</feature>
<feature type="transmembrane region" description="Helical" evidence="1">
    <location>
        <begin position="94"/>
        <end position="114"/>
    </location>
</feature>
<feature type="transmembrane region" description="Helical" evidence="1">
    <location>
        <begin position="138"/>
        <end position="158"/>
    </location>
</feature>
<feature type="transmembrane region" description="Helical" evidence="1">
    <location>
        <begin position="166"/>
        <end position="186"/>
    </location>
</feature>
<feature type="transmembrane region" description="Helical" evidence="1">
    <location>
        <begin position="209"/>
        <end position="229"/>
    </location>
</feature>
<feature type="transmembrane region" description="Helical" evidence="1">
    <location>
        <begin position="250"/>
        <end position="270"/>
    </location>
</feature>
<feature type="transmembrane region" description="Helical" evidence="1">
    <location>
        <begin position="291"/>
        <end position="311"/>
    </location>
</feature>
<feature type="transmembrane region" description="Helical" evidence="1">
    <location>
        <begin position="321"/>
        <end position="341"/>
    </location>
</feature>
<feature type="transmembrane region" description="Helical" evidence="1">
    <location>
        <begin position="361"/>
        <end position="381"/>
    </location>
</feature>
<feature type="transmembrane region" description="Helical" evidence="1">
    <location>
        <begin position="384"/>
        <end position="404"/>
    </location>
</feature>
<feature type="sequence variant" id="VAR_030141" description="In dbSNP:rs2306387.">
    <original>G</original>
    <variation>R</variation>
    <location>
        <position position="292"/>
    </location>
</feature>
<name>MFSD3_HUMAN</name>
<accession>Q96ES6</accession>
<keyword id="KW-0472">Membrane</keyword>
<keyword id="KW-1267">Proteomics identification</keyword>
<keyword id="KW-1185">Reference proteome</keyword>
<keyword id="KW-0812">Transmembrane</keyword>
<keyword id="KW-1133">Transmembrane helix</keyword>
<keyword id="KW-0813">Transport</keyword>
<proteinExistence type="evidence at protein level"/>
<evidence type="ECO:0000255" key="1"/>
<evidence type="ECO:0000305" key="2"/>
<reference key="1">
    <citation type="journal article" date="2004" name="Genome Res.">
        <title>The status, quality, and expansion of the NIH full-length cDNA project: the Mammalian Gene Collection (MGC).</title>
        <authorList>
            <consortium name="The MGC Project Team"/>
        </authorList>
    </citation>
    <scope>NUCLEOTIDE SEQUENCE [LARGE SCALE MRNA]</scope>
    <source>
        <tissue>Ovary</tissue>
    </source>
</reference>
<dbReference type="EMBL" id="BC011982">
    <property type="protein sequence ID" value="AAH11982.1"/>
    <property type="molecule type" value="mRNA"/>
</dbReference>
<dbReference type="CCDS" id="CCDS6431.1"/>
<dbReference type="RefSeq" id="NP_612440.1">
    <property type="nucleotide sequence ID" value="NM_138431.3"/>
</dbReference>
<dbReference type="SMR" id="Q96ES6"/>
<dbReference type="BioGRID" id="125254">
    <property type="interactions" value="23"/>
</dbReference>
<dbReference type="FunCoup" id="Q96ES6">
    <property type="interactions" value="71"/>
</dbReference>
<dbReference type="IntAct" id="Q96ES6">
    <property type="interactions" value="19"/>
</dbReference>
<dbReference type="MINT" id="Q96ES6"/>
<dbReference type="STRING" id="9606.ENSP00000301327"/>
<dbReference type="iPTMnet" id="Q96ES6"/>
<dbReference type="PhosphoSitePlus" id="Q96ES6"/>
<dbReference type="BioMuta" id="MFSD3"/>
<dbReference type="DMDM" id="74731607"/>
<dbReference type="jPOST" id="Q96ES6"/>
<dbReference type="MassIVE" id="Q96ES6"/>
<dbReference type="PaxDb" id="9606-ENSP00000301327"/>
<dbReference type="PeptideAtlas" id="Q96ES6"/>
<dbReference type="ProteomicsDB" id="76445"/>
<dbReference type="Pumba" id="Q96ES6"/>
<dbReference type="Antibodypedia" id="28578">
    <property type="antibodies" value="88 antibodies from 14 providers"/>
</dbReference>
<dbReference type="DNASU" id="113655"/>
<dbReference type="Ensembl" id="ENST00000301327.5">
    <property type="protein sequence ID" value="ENSP00000301327.3"/>
    <property type="gene ID" value="ENSG00000167700.9"/>
</dbReference>
<dbReference type="GeneID" id="113655"/>
<dbReference type="KEGG" id="hsa:113655"/>
<dbReference type="MANE-Select" id="ENST00000301327.5">
    <property type="protein sequence ID" value="ENSP00000301327.3"/>
    <property type="RefSeq nucleotide sequence ID" value="NM_138431.3"/>
    <property type="RefSeq protein sequence ID" value="NP_612440.1"/>
</dbReference>
<dbReference type="UCSC" id="uc003zdi.2">
    <property type="organism name" value="human"/>
</dbReference>
<dbReference type="AGR" id="HGNC:25157"/>
<dbReference type="CTD" id="113655"/>
<dbReference type="DisGeNET" id="113655"/>
<dbReference type="GeneCards" id="MFSD3"/>
<dbReference type="HGNC" id="HGNC:25157">
    <property type="gene designation" value="MFSD3"/>
</dbReference>
<dbReference type="HPA" id="ENSG00000167700">
    <property type="expression patterns" value="Low tissue specificity"/>
</dbReference>
<dbReference type="MalaCards" id="MFSD3"/>
<dbReference type="MIM" id="620308">
    <property type="type" value="gene"/>
</dbReference>
<dbReference type="neXtProt" id="NX_Q96ES6"/>
<dbReference type="OpenTargets" id="ENSG00000167700"/>
<dbReference type="PharmGKB" id="PA142671464"/>
<dbReference type="VEuPathDB" id="HostDB:ENSG00000167700"/>
<dbReference type="eggNOG" id="KOG3574">
    <property type="taxonomic scope" value="Eukaryota"/>
</dbReference>
<dbReference type="GeneTree" id="ENSGT00940000154019"/>
<dbReference type="HOGENOM" id="CLU_029352_2_1_1"/>
<dbReference type="InParanoid" id="Q96ES6"/>
<dbReference type="OMA" id="PFYVDMG"/>
<dbReference type="OrthoDB" id="6415790at2759"/>
<dbReference type="PAN-GO" id="Q96ES6">
    <property type="GO annotations" value="1 GO annotation based on evolutionary models"/>
</dbReference>
<dbReference type="PhylomeDB" id="Q96ES6"/>
<dbReference type="TreeFam" id="TF330933"/>
<dbReference type="PathwayCommons" id="Q96ES6"/>
<dbReference type="SignaLink" id="Q96ES6"/>
<dbReference type="BioGRID-ORCS" id="113655">
    <property type="hits" value="19 hits in 1159 CRISPR screens"/>
</dbReference>
<dbReference type="ChiTaRS" id="MFSD3">
    <property type="organism name" value="human"/>
</dbReference>
<dbReference type="GenomeRNAi" id="113655"/>
<dbReference type="Pharos" id="Q96ES6">
    <property type="development level" value="Tdark"/>
</dbReference>
<dbReference type="PRO" id="PR:Q96ES6"/>
<dbReference type="Proteomes" id="UP000005640">
    <property type="component" value="Chromosome 8"/>
</dbReference>
<dbReference type="RNAct" id="Q96ES6">
    <property type="molecule type" value="protein"/>
</dbReference>
<dbReference type="Bgee" id="ENSG00000167700">
    <property type="expression patterns" value="Expressed in mucosa of transverse colon and 116 other cell types or tissues"/>
</dbReference>
<dbReference type="GO" id="GO:0016020">
    <property type="term" value="C:membrane"/>
    <property type="evidence" value="ECO:0007669"/>
    <property type="project" value="UniProtKB-SubCell"/>
</dbReference>
<dbReference type="GO" id="GO:0022857">
    <property type="term" value="F:transmembrane transporter activity"/>
    <property type="evidence" value="ECO:0007669"/>
    <property type="project" value="InterPro"/>
</dbReference>
<dbReference type="CDD" id="cd17485">
    <property type="entry name" value="MFS_MFSD3"/>
    <property type="match status" value="1"/>
</dbReference>
<dbReference type="FunFam" id="1.20.1250.20:FF:000176">
    <property type="entry name" value="Major facilitator superfamily domain containing 3"/>
    <property type="match status" value="1"/>
</dbReference>
<dbReference type="Gene3D" id="1.20.1250.20">
    <property type="entry name" value="MFS general substrate transporter like domains"/>
    <property type="match status" value="1"/>
</dbReference>
<dbReference type="InterPro" id="IPR004752">
    <property type="entry name" value="AmpG_permease/AT-1"/>
</dbReference>
<dbReference type="InterPro" id="IPR011701">
    <property type="entry name" value="MFS"/>
</dbReference>
<dbReference type="InterPro" id="IPR036259">
    <property type="entry name" value="MFS_trans_sf"/>
</dbReference>
<dbReference type="PANTHER" id="PTHR12778:SF10">
    <property type="entry name" value="MAJOR FACILITATOR SUPERFAMILY DOMAIN-CONTAINING PROTEIN 3"/>
    <property type="match status" value="1"/>
</dbReference>
<dbReference type="PANTHER" id="PTHR12778">
    <property type="entry name" value="SOLUTE CARRIER FAMILY 33 ACETYL-COA TRANSPORTER -RELATED"/>
    <property type="match status" value="1"/>
</dbReference>
<dbReference type="Pfam" id="PF07690">
    <property type="entry name" value="MFS_1"/>
    <property type="match status" value="1"/>
</dbReference>
<dbReference type="SUPFAM" id="SSF103473">
    <property type="entry name" value="MFS general substrate transporter"/>
    <property type="match status" value="1"/>
</dbReference>
<gene>
    <name type="primary">MFSD3</name>
</gene>
<organism>
    <name type="scientific">Homo sapiens</name>
    <name type="common">Human</name>
    <dbReference type="NCBI Taxonomy" id="9606"/>
    <lineage>
        <taxon>Eukaryota</taxon>
        <taxon>Metazoa</taxon>
        <taxon>Chordata</taxon>
        <taxon>Craniata</taxon>
        <taxon>Vertebrata</taxon>
        <taxon>Euteleostomi</taxon>
        <taxon>Mammalia</taxon>
        <taxon>Eutheria</taxon>
        <taxon>Euarchontoglires</taxon>
        <taxon>Primates</taxon>
        <taxon>Haplorrhini</taxon>
        <taxon>Catarrhini</taxon>
        <taxon>Hominidae</taxon>
        <taxon>Homo</taxon>
    </lineage>
</organism>
<comment type="interaction">
    <interactant intactId="EBI-745345">
        <id>Q96ES6</id>
    </interactant>
    <interactant intactId="EBI-13059134">
        <id>Q13520</id>
        <label>AQP6</label>
    </interactant>
    <organismsDiffer>false</organismsDiffer>
    <experiments>3</experiments>
</comment>
<comment type="interaction">
    <interactant intactId="EBI-745345">
        <id>Q96ES6</id>
    </interactant>
    <interactant intactId="EBI-12012928">
        <id>P60371</id>
        <label>KRTAP10-6</label>
    </interactant>
    <organismsDiffer>false</organismsDiffer>
    <experiments>3</experiments>
</comment>
<comment type="interaction">
    <interactant intactId="EBI-745345">
        <id>Q96ES6</id>
    </interactant>
    <interactant intactId="EBI-6163737">
        <id>Q8N4V1</id>
        <label>MMGT1</label>
    </interactant>
    <organismsDiffer>false</organismsDiffer>
    <experiments>3</experiments>
</comment>
<comment type="interaction">
    <interactant intactId="EBI-745345">
        <id>Q96ES6</id>
    </interactant>
    <interactant intactId="EBI-13292283">
        <id>Q9UHI5</id>
        <label>SLC7A8</label>
    </interactant>
    <organismsDiffer>false</organismsDiffer>
    <experiments>3</experiments>
</comment>
<comment type="interaction">
    <interactant intactId="EBI-745345">
        <id>Q96ES6</id>
    </interactant>
    <interactant intactId="EBI-988826">
        <id>Q9Y385</id>
        <label>UBE2J1</label>
    </interactant>
    <organismsDiffer>false</organismsDiffer>
    <experiments>3</experiments>
</comment>
<comment type="subcellular location">
    <subcellularLocation>
        <location evidence="2">Membrane</location>
        <topology evidence="2">Multi-pass membrane protein</topology>
    </subcellularLocation>
</comment>
<comment type="similarity">
    <text evidence="2">Belongs to the major facilitator superfamily.</text>
</comment>
<protein>
    <recommendedName>
        <fullName>Major facilitator superfamily domain-containing protein 3</fullName>
    </recommendedName>
</protein>
<sequence length="412" mass="42696">MRGKLLPLAGLYLVQGLPYGLQSGLLPVLLRAGGLSLTRVGLAKVLYAPWLLKLAWAPLVDAQGSARAWVTRSTAGLGLVCGLLAGLPPPGAGQAGLPAAVAGLLLLLNLGAAMQDVALDALAVQLLEPAELGPGNTVQVVAYKLGAALAGGALLALLPTFSWPQLFLLLAATYWLAAALAWAAPALRRLPQQPPSEQRPHTAHLLRDVLAVPGTVWTAGFVLTYKLGEQGASSLFPLLLLDHGVSAPELGLWNGVGAVVCSIAGSSLGGTLLAKHWKLLPLLRSVLRFRLGGLACQTALVFHLDTLGASMDAGTILRGSALLSLCLQHFLGGLVTTVTFTGMMRCSQLAPRALQATHYSLLATLELLGKLLLGTLAGGLADGLGPHPCFLLLLILSAFPVLYLDLAPSTFL</sequence>